<accession>C4Z534</accession>
<comment type="function">
    <text evidence="1">Cell wall formation. Catalyzes the addition of glutamate to the nucleotide precursor UDP-N-acetylmuramoyl-L-alanine (UMA).</text>
</comment>
<comment type="catalytic activity">
    <reaction evidence="1">
        <text>UDP-N-acetyl-alpha-D-muramoyl-L-alanine + D-glutamate + ATP = UDP-N-acetyl-alpha-D-muramoyl-L-alanyl-D-glutamate + ADP + phosphate + H(+)</text>
        <dbReference type="Rhea" id="RHEA:16429"/>
        <dbReference type="ChEBI" id="CHEBI:15378"/>
        <dbReference type="ChEBI" id="CHEBI:29986"/>
        <dbReference type="ChEBI" id="CHEBI:30616"/>
        <dbReference type="ChEBI" id="CHEBI:43474"/>
        <dbReference type="ChEBI" id="CHEBI:83898"/>
        <dbReference type="ChEBI" id="CHEBI:83900"/>
        <dbReference type="ChEBI" id="CHEBI:456216"/>
        <dbReference type="EC" id="6.3.2.9"/>
    </reaction>
</comment>
<comment type="pathway">
    <text evidence="1">Cell wall biogenesis; peptidoglycan biosynthesis.</text>
</comment>
<comment type="subcellular location">
    <subcellularLocation>
        <location evidence="1">Cytoplasm</location>
    </subcellularLocation>
</comment>
<comment type="similarity">
    <text evidence="1">Belongs to the MurCDEF family.</text>
</comment>
<sequence>MDLKNKTVMVVGTGISGIGAVDLLNKVGADCILYDGNEKLDRQKVQEKLGDNKAEIIIGAFDEALLSKIDLLVISPGVPIDSPIVLTFKNAGIPVWGEIELAYNYDKGKIIAITGTNGKTTTTALVGQIIAAYNEKTFVVGNIGNSYTGEVLKTSEDSYTVAEISSFQLETVHEFHPIVSAILNITPDHLNRHHTMECYAWTKERISENQTKADTCVLNLEDKYLTDFAPECKANVVWFSSERKPSVGAYVDGEMIKYTDGTNDYDMLNVHDMNLLGKHNYENVCAAIAMTKAAGIPDDIIIEQVKKFKAVEHRIEYVATKNGVDYYNDSKGTNPEAAVKAIEAMVKPTILIGGGYDKGSEFDLYVKAFKDKVKLLVLIGQTSAKIADTCKKYGFENIEYADSMEQVVDICAKNAVSGDAVLLSPACASWGMFDNYEQRGRIFKDLVNNL</sequence>
<proteinExistence type="inferred from homology"/>
<reference key="1">
    <citation type="journal article" date="2009" name="Proc. Natl. Acad. Sci. U.S.A.">
        <title>Characterizing a model human gut microbiota composed of members of its two dominant bacterial phyla.</title>
        <authorList>
            <person name="Mahowald M.A."/>
            <person name="Rey F.E."/>
            <person name="Seedorf H."/>
            <person name="Turnbaugh P.J."/>
            <person name="Fulton R.S."/>
            <person name="Wollam A."/>
            <person name="Shah N."/>
            <person name="Wang C."/>
            <person name="Magrini V."/>
            <person name="Wilson R.K."/>
            <person name="Cantarel B.L."/>
            <person name="Coutinho P.M."/>
            <person name="Henrissat B."/>
            <person name="Crock L.W."/>
            <person name="Russell A."/>
            <person name="Verberkmoes N.C."/>
            <person name="Hettich R.L."/>
            <person name="Gordon J.I."/>
        </authorList>
    </citation>
    <scope>NUCLEOTIDE SEQUENCE [LARGE SCALE GENOMIC DNA]</scope>
    <source>
        <strain>ATCC 27750 / DSM 3376 / VPI C15-48 / C15-B4</strain>
    </source>
</reference>
<protein>
    <recommendedName>
        <fullName evidence="1">UDP-N-acetylmuramoylalanine--D-glutamate ligase</fullName>
        <ecNumber evidence="1">6.3.2.9</ecNumber>
    </recommendedName>
    <alternativeName>
        <fullName evidence="1">D-glutamic acid-adding enzyme</fullName>
    </alternativeName>
    <alternativeName>
        <fullName evidence="1">UDP-N-acetylmuramoyl-L-alanyl-D-glutamate synthetase</fullName>
    </alternativeName>
</protein>
<evidence type="ECO:0000255" key="1">
    <source>
        <dbReference type="HAMAP-Rule" id="MF_00639"/>
    </source>
</evidence>
<gene>
    <name evidence="1" type="primary">murD</name>
    <name type="ordered locus">EUBELI_00730</name>
</gene>
<keyword id="KW-0067">ATP-binding</keyword>
<keyword id="KW-0131">Cell cycle</keyword>
<keyword id="KW-0132">Cell division</keyword>
<keyword id="KW-0133">Cell shape</keyword>
<keyword id="KW-0961">Cell wall biogenesis/degradation</keyword>
<keyword id="KW-0963">Cytoplasm</keyword>
<keyword id="KW-0436">Ligase</keyword>
<keyword id="KW-0547">Nucleotide-binding</keyword>
<keyword id="KW-0573">Peptidoglycan synthesis</keyword>
<keyword id="KW-1185">Reference proteome</keyword>
<name>MURD_LACE2</name>
<organism>
    <name type="scientific">Lachnospira eligens (strain ATCC 27750 / DSM 3376 / VPI C15-48 / C15-B4)</name>
    <name type="common">Eubacterium eligens</name>
    <dbReference type="NCBI Taxonomy" id="515620"/>
    <lineage>
        <taxon>Bacteria</taxon>
        <taxon>Bacillati</taxon>
        <taxon>Bacillota</taxon>
        <taxon>Clostridia</taxon>
        <taxon>Lachnospirales</taxon>
        <taxon>Lachnospiraceae</taxon>
        <taxon>Lachnospira</taxon>
    </lineage>
</organism>
<feature type="chain" id="PRO_1000212371" description="UDP-N-acetylmuramoylalanine--D-glutamate ligase">
    <location>
        <begin position="1"/>
        <end position="450"/>
    </location>
</feature>
<feature type="binding site" evidence="1">
    <location>
        <begin position="115"/>
        <end position="121"/>
    </location>
    <ligand>
        <name>ATP</name>
        <dbReference type="ChEBI" id="CHEBI:30616"/>
    </ligand>
</feature>
<dbReference type="EC" id="6.3.2.9" evidence="1"/>
<dbReference type="EMBL" id="CP001104">
    <property type="protein sequence ID" value="ACR71738.1"/>
    <property type="molecule type" value="Genomic_DNA"/>
</dbReference>
<dbReference type="RefSeq" id="WP_012738974.1">
    <property type="nucleotide sequence ID" value="NC_012778.1"/>
</dbReference>
<dbReference type="SMR" id="C4Z534"/>
<dbReference type="STRING" id="515620.EUBELI_00730"/>
<dbReference type="GeneID" id="41355474"/>
<dbReference type="KEGG" id="eel:EUBELI_00730"/>
<dbReference type="eggNOG" id="COG0771">
    <property type="taxonomic scope" value="Bacteria"/>
</dbReference>
<dbReference type="HOGENOM" id="CLU_032540_0_0_9"/>
<dbReference type="UniPathway" id="UPA00219"/>
<dbReference type="Proteomes" id="UP000001476">
    <property type="component" value="Chromosome"/>
</dbReference>
<dbReference type="GO" id="GO:0005737">
    <property type="term" value="C:cytoplasm"/>
    <property type="evidence" value="ECO:0007669"/>
    <property type="project" value="UniProtKB-SubCell"/>
</dbReference>
<dbReference type="GO" id="GO:0005524">
    <property type="term" value="F:ATP binding"/>
    <property type="evidence" value="ECO:0007669"/>
    <property type="project" value="UniProtKB-UniRule"/>
</dbReference>
<dbReference type="GO" id="GO:0008764">
    <property type="term" value="F:UDP-N-acetylmuramoylalanine-D-glutamate ligase activity"/>
    <property type="evidence" value="ECO:0007669"/>
    <property type="project" value="UniProtKB-UniRule"/>
</dbReference>
<dbReference type="GO" id="GO:0051301">
    <property type="term" value="P:cell division"/>
    <property type="evidence" value="ECO:0007669"/>
    <property type="project" value="UniProtKB-KW"/>
</dbReference>
<dbReference type="GO" id="GO:0071555">
    <property type="term" value="P:cell wall organization"/>
    <property type="evidence" value="ECO:0007669"/>
    <property type="project" value="UniProtKB-KW"/>
</dbReference>
<dbReference type="GO" id="GO:0009252">
    <property type="term" value="P:peptidoglycan biosynthetic process"/>
    <property type="evidence" value="ECO:0007669"/>
    <property type="project" value="UniProtKB-UniRule"/>
</dbReference>
<dbReference type="GO" id="GO:0008360">
    <property type="term" value="P:regulation of cell shape"/>
    <property type="evidence" value="ECO:0007669"/>
    <property type="project" value="UniProtKB-KW"/>
</dbReference>
<dbReference type="Gene3D" id="3.90.190.20">
    <property type="entry name" value="Mur ligase, C-terminal domain"/>
    <property type="match status" value="1"/>
</dbReference>
<dbReference type="Gene3D" id="3.40.1190.10">
    <property type="entry name" value="Mur-like, catalytic domain"/>
    <property type="match status" value="1"/>
</dbReference>
<dbReference type="Gene3D" id="3.40.50.720">
    <property type="entry name" value="NAD(P)-binding Rossmann-like Domain"/>
    <property type="match status" value="1"/>
</dbReference>
<dbReference type="HAMAP" id="MF_00639">
    <property type="entry name" value="MurD"/>
    <property type="match status" value="1"/>
</dbReference>
<dbReference type="InterPro" id="IPR036565">
    <property type="entry name" value="Mur-like_cat_sf"/>
</dbReference>
<dbReference type="InterPro" id="IPR004101">
    <property type="entry name" value="Mur_ligase_C"/>
</dbReference>
<dbReference type="InterPro" id="IPR036615">
    <property type="entry name" value="Mur_ligase_C_dom_sf"/>
</dbReference>
<dbReference type="InterPro" id="IPR013221">
    <property type="entry name" value="Mur_ligase_cen"/>
</dbReference>
<dbReference type="InterPro" id="IPR005762">
    <property type="entry name" value="MurD"/>
</dbReference>
<dbReference type="NCBIfam" id="TIGR01087">
    <property type="entry name" value="murD"/>
    <property type="match status" value="1"/>
</dbReference>
<dbReference type="PANTHER" id="PTHR43692">
    <property type="entry name" value="UDP-N-ACETYLMURAMOYLALANINE--D-GLUTAMATE LIGASE"/>
    <property type="match status" value="1"/>
</dbReference>
<dbReference type="PANTHER" id="PTHR43692:SF1">
    <property type="entry name" value="UDP-N-ACETYLMURAMOYLALANINE--D-GLUTAMATE LIGASE"/>
    <property type="match status" value="1"/>
</dbReference>
<dbReference type="Pfam" id="PF02875">
    <property type="entry name" value="Mur_ligase_C"/>
    <property type="match status" value="1"/>
</dbReference>
<dbReference type="Pfam" id="PF08245">
    <property type="entry name" value="Mur_ligase_M"/>
    <property type="match status" value="1"/>
</dbReference>
<dbReference type="Pfam" id="PF21799">
    <property type="entry name" value="MurD-like_N"/>
    <property type="match status" value="1"/>
</dbReference>
<dbReference type="SUPFAM" id="SSF51984">
    <property type="entry name" value="MurCD N-terminal domain"/>
    <property type="match status" value="1"/>
</dbReference>
<dbReference type="SUPFAM" id="SSF53623">
    <property type="entry name" value="MurD-like peptide ligases, catalytic domain"/>
    <property type="match status" value="1"/>
</dbReference>
<dbReference type="SUPFAM" id="SSF53244">
    <property type="entry name" value="MurD-like peptide ligases, peptide-binding domain"/>
    <property type="match status" value="1"/>
</dbReference>